<protein>
    <recommendedName>
        <fullName evidence="1">DNA repair protein RecO</fullName>
    </recommendedName>
    <alternativeName>
        <fullName evidence="1">Recombination protein O</fullName>
    </alternativeName>
</protein>
<accession>Q033E7</accession>
<name>RECO_LACLS</name>
<organism>
    <name type="scientific">Lactococcus lactis subsp. cremoris (strain SK11)</name>
    <dbReference type="NCBI Taxonomy" id="272622"/>
    <lineage>
        <taxon>Bacteria</taxon>
        <taxon>Bacillati</taxon>
        <taxon>Bacillota</taxon>
        <taxon>Bacilli</taxon>
        <taxon>Lactobacillales</taxon>
        <taxon>Streptococcaceae</taxon>
        <taxon>Lactococcus</taxon>
        <taxon>Lactococcus cremoris subsp. cremoris</taxon>
    </lineage>
</organism>
<reference key="1">
    <citation type="journal article" date="2006" name="Proc. Natl. Acad. Sci. U.S.A.">
        <title>Comparative genomics of the lactic acid bacteria.</title>
        <authorList>
            <person name="Makarova K.S."/>
            <person name="Slesarev A."/>
            <person name="Wolf Y.I."/>
            <person name="Sorokin A."/>
            <person name="Mirkin B."/>
            <person name="Koonin E.V."/>
            <person name="Pavlov A."/>
            <person name="Pavlova N."/>
            <person name="Karamychev V."/>
            <person name="Polouchine N."/>
            <person name="Shakhova V."/>
            <person name="Grigoriev I."/>
            <person name="Lou Y."/>
            <person name="Rohksar D."/>
            <person name="Lucas S."/>
            <person name="Huang K."/>
            <person name="Goodstein D.M."/>
            <person name="Hawkins T."/>
            <person name="Plengvidhya V."/>
            <person name="Welker D."/>
            <person name="Hughes J."/>
            <person name="Goh Y."/>
            <person name="Benson A."/>
            <person name="Baldwin K."/>
            <person name="Lee J.-H."/>
            <person name="Diaz-Muniz I."/>
            <person name="Dosti B."/>
            <person name="Smeianov V."/>
            <person name="Wechter W."/>
            <person name="Barabote R."/>
            <person name="Lorca G."/>
            <person name="Altermann E."/>
            <person name="Barrangou R."/>
            <person name="Ganesan B."/>
            <person name="Xie Y."/>
            <person name="Rawsthorne H."/>
            <person name="Tamir D."/>
            <person name="Parker C."/>
            <person name="Breidt F."/>
            <person name="Broadbent J.R."/>
            <person name="Hutkins R."/>
            <person name="O'Sullivan D."/>
            <person name="Steele J."/>
            <person name="Unlu G."/>
            <person name="Saier M.H. Jr."/>
            <person name="Klaenhammer T."/>
            <person name="Richardson P."/>
            <person name="Kozyavkin S."/>
            <person name="Weimer B.C."/>
            <person name="Mills D.A."/>
        </authorList>
    </citation>
    <scope>NUCLEOTIDE SEQUENCE [LARGE SCALE GENOMIC DNA]</scope>
    <source>
        <strain>SK11</strain>
    </source>
</reference>
<comment type="function">
    <text evidence="1">Involved in DNA repair and RecF pathway recombination.</text>
</comment>
<comment type="similarity">
    <text evidence="1">Belongs to the RecO family.</text>
</comment>
<gene>
    <name evidence="1" type="primary">recO</name>
    <name type="ordered locus">LACR_0047</name>
</gene>
<evidence type="ECO:0000255" key="1">
    <source>
        <dbReference type="HAMAP-Rule" id="MF_00201"/>
    </source>
</evidence>
<keyword id="KW-0227">DNA damage</keyword>
<keyword id="KW-0233">DNA recombination</keyword>
<keyword id="KW-0234">DNA repair</keyword>
<sequence length="251" mass="28692">MRDAETQGLVLYSRNYKEKDKLVKIFTESFGKRMFFVKNFGKSSYASSLQAFTDGKLTATINDGGFSFIEDVSEVVVYKNISADIFINAHASYIISLADAAISDNQYDPALYGFLKRSLELLDQGFDMEVVTNIFELQVLHRFGVSLNFSECAFCHKTVGPFDFSYKFSGCLCPRHFDEDLRRSHLDPNVIYLINLFQEISLDELKKISIKAEMKAKIRQFIDGLYDEYVGIHLKSKKFLDGMSGWADIMK</sequence>
<proteinExistence type="inferred from homology"/>
<feature type="chain" id="PRO_1000012137" description="DNA repair protein RecO">
    <location>
        <begin position="1"/>
        <end position="251"/>
    </location>
</feature>
<dbReference type="EMBL" id="CP000425">
    <property type="protein sequence ID" value="ABJ71675.1"/>
    <property type="molecule type" value="Genomic_DNA"/>
</dbReference>
<dbReference type="RefSeq" id="WP_011675114.1">
    <property type="nucleotide sequence ID" value="NC_008527.1"/>
</dbReference>
<dbReference type="SMR" id="Q033E7"/>
<dbReference type="KEGG" id="llc:LACR_0047"/>
<dbReference type="HOGENOM" id="CLU_066632_4_0_9"/>
<dbReference type="Proteomes" id="UP000000240">
    <property type="component" value="Chromosome"/>
</dbReference>
<dbReference type="GO" id="GO:0043590">
    <property type="term" value="C:bacterial nucleoid"/>
    <property type="evidence" value="ECO:0007669"/>
    <property type="project" value="TreeGrafter"/>
</dbReference>
<dbReference type="GO" id="GO:0006310">
    <property type="term" value="P:DNA recombination"/>
    <property type="evidence" value="ECO:0007669"/>
    <property type="project" value="UniProtKB-UniRule"/>
</dbReference>
<dbReference type="GO" id="GO:0006302">
    <property type="term" value="P:double-strand break repair"/>
    <property type="evidence" value="ECO:0007669"/>
    <property type="project" value="TreeGrafter"/>
</dbReference>
<dbReference type="Gene3D" id="2.40.50.140">
    <property type="entry name" value="Nucleic acid-binding proteins"/>
    <property type="match status" value="1"/>
</dbReference>
<dbReference type="Gene3D" id="1.20.1440.120">
    <property type="entry name" value="Recombination protein O, C-terminal domain"/>
    <property type="match status" value="1"/>
</dbReference>
<dbReference type="HAMAP" id="MF_00201">
    <property type="entry name" value="RecO"/>
    <property type="match status" value="1"/>
</dbReference>
<dbReference type="InterPro" id="IPR037278">
    <property type="entry name" value="ARFGAP/RecO"/>
</dbReference>
<dbReference type="InterPro" id="IPR022572">
    <property type="entry name" value="DNA_rep/recomb_RecO_N"/>
</dbReference>
<dbReference type="InterPro" id="IPR012340">
    <property type="entry name" value="NA-bd_OB-fold"/>
</dbReference>
<dbReference type="InterPro" id="IPR003717">
    <property type="entry name" value="RecO"/>
</dbReference>
<dbReference type="InterPro" id="IPR042242">
    <property type="entry name" value="RecO_C"/>
</dbReference>
<dbReference type="NCBIfam" id="TIGR00613">
    <property type="entry name" value="reco"/>
    <property type="match status" value="1"/>
</dbReference>
<dbReference type="PANTHER" id="PTHR33991">
    <property type="entry name" value="DNA REPAIR PROTEIN RECO"/>
    <property type="match status" value="1"/>
</dbReference>
<dbReference type="PANTHER" id="PTHR33991:SF1">
    <property type="entry name" value="DNA REPAIR PROTEIN RECO"/>
    <property type="match status" value="1"/>
</dbReference>
<dbReference type="Pfam" id="PF02565">
    <property type="entry name" value="RecO_C"/>
    <property type="match status" value="1"/>
</dbReference>
<dbReference type="Pfam" id="PF11967">
    <property type="entry name" value="RecO_N"/>
    <property type="match status" value="1"/>
</dbReference>
<dbReference type="SUPFAM" id="SSF57863">
    <property type="entry name" value="ArfGap/RecO-like zinc finger"/>
    <property type="match status" value="1"/>
</dbReference>
<dbReference type="SUPFAM" id="SSF50249">
    <property type="entry name" value="Nucleic acid-binding proteins"/>
    <property type="match status" value="1"/>
</dbReference>